<sequence>METIFALSSGAPPAAIGVIRISGTEARGALEALAGSVPDARKAALRRLRDGEGKTLDDALVLWLPGPDNATGEDCVELHCHGGRAVIAAIERTLGTMPGLRRAEPGEFTRRAFANGRIDLAEAEGLADLLFAETELQRQVLQASAGGRLSELVGGWRERVLALSAQVESALDFSDEDDVDELAPAFYTDVSTLADELGEWLERPQVERLRDGVRVVFAGPPNAGKSTLFNALLQSEAAIVSPIAGTTRDVLERPVAFGGTPFTLIDTAGLHEGGDDSIERIGIDRARAALRDADIVLWLGPEGEGPDNAWEIDAQSDIDERTAKSAPRLRLSAKTGEGIDALVRDLRDAARDLLPRPGDVAVNARQHALLSEAAGELAEITRGQDLLITAEHLRTARSAFDRFTGRATTEDMLDALFGRFCIGK</sequence>
<dbReference type="EC" id="3.6.-.-" evidence="1"/>
<dbReference type="EMBL" id="CP000157">
    <property type="protein sequence ID" value="ABC64702.1"/>
    <property type="molecule type" value="Genomic_DNA"/>
</dbReference>
<dbReference type="RefSeq" id="WP_011415524.1">
    <property type="nucleotide sequence ID" value="NC_007722.1"/>
</dbReference>
<dbReference type="SMR" id="Q2N6I9"/>
<dbReference type="STRING" id="314225.ELI_13050"/>
<dbReference type="KEGG" id="eli:ELI_13050"/>
<dbReference type="eggNOG" id="COG0486">
    <property type="taxonomic scope" value="Bacteria"/>
</dbReference>
<dbReference type="HOGENOM" id="CLU_019624_3_1_5"/>
<dbReference type="OrthoDB" id="9805918at2"/>
<dbReference type="Proteomes" id="UP000008808">
    <property type="component" value="Chromosome"/>
</dbReference>
<dbReference type="GO" id="GO:0005737">
    <property type="term" value="C:cytoplasm"/>
    <property type="evidence" value="ECO:0007669"/>
    <property type="project" value="UniProtKB-SubCell"/>
</dbReference>
<dbReference type="GO" id="GO:0005525">
    <property type="term" value="F:GTP binding"/>
    <property type="evidence" value="ECO:0007669"/>
    <property type="project" value="UniProtKB-UniRule"/>
</dbReference>
<dbReference type="GO" id="GO:0003924">
    <property type="term" value="F:GTPase activity"/>
    <property type="evidence" value="ECO:0007669"/>
    <property type="project" value="UniProtKB-UniRule"/>
</dbReference>
<dbReference type="GO" id="GO:0046872">
    <property type="term" value="F:metal ion binding"/>
    <property type="evidence" value="ECO:0007669"/>
    <property type="project" value="UniProtKB-KW"/>
</dbReference>
<dbReference type="GO" id="GO:0030488">
    <property type="term" value="P:tRNA methylation"/>
    <property type="evidence" value="ECO:0007669"/>
    <property type="project" value="TreeGrafter"/>
</dbReference>
<dbReference type="GO" id="GO:0002098">
    <property type="term" value="P:tRNA wobble uridine modification"/>
    <property type="evidence" value="ECO:0007669"/>
    <property type="project" value="TreeGrafter"/>
</dbReference>
<dbReference type="CDD" id="cd04164">
    <property type="entry name" value="trmE"/>
    <property type="match status" value="1"/>
</dbReference>
<dbReference type="CDD" id="cd14858">
    <property type="entry name" value="TrmE_N"/>
    <property type="match status" value="1"/>
</dbReference>
<dbReference type="FunFam" id="3.30.1360.120:FF:000007">
    <property type="entry name" value="tRNA modification GTPase GTPBP3, mitochondrial"/>
    <property type="match status" value="1"/>
</dbReference>
<dbReference type="Gene3D" id="3.40.50.300">
    <property type="entry name" value="P-loop containing nucleotide triphosphate hydrolases"/>
    <property type="match status" value="1"/>
</dbReference>
<dbReference type="Gene3D" id="3.30.1360.120">
    <property type="entry name" value="Probable tRNA modification gtpase trme, domain 1"/>
    <property type="match status" value="1"/>
</dbReference>
<dbReference type="Gene3D" id="1.20.120.430">
    <property type="entry name" value="tRNA modification GTPase MnmE domain 2"/>
    <property type="match status" value="1"/>
</dbReference>
<dbReference type="HAMAP" id="MF_00379">
    <property type="entry name" value="GTPase_MnmE"/>
    <property type="match status" value="1"/>
</dbReference>
<dbReference type="InterPro" id="IPR031168">
    <property type="entry name" value="G_TrmE"/>
</dbReference>
<dbReference type="InterPro" id="IPR006073">
    <property type="entry name" value="GTP-bd"/>
</dbReference>
<dbReference type="InterPro" id="IPR018948">
    <property type="entry name" value="GTP-bd_TrmE_N"/>
</dbReference>
<dbReference type="InterPro" id="IPR004520">
    <property type="entry name" value="GTPase_MnmE"/>
</dbReference>
<dbReference type="InterPro" id="IPR027368">
    <property type="entry name" value="MnmE_dom2"/>
</dbReference>
<dbReference type="InterPro" id="IPR025867">
    <property type="entry name" value="MnmE_helical"/>
</dbReference>
<dbReference type="InterPro" id="IPR027417">
    <property type="entry name" value="P-loop_NTPase"/>
</dbReference>
<dbReference type="InterPro" id="IPR005225">
    <property type="entry name" value="Small_GTP-bd"/>
</dbReference>
<dbReference type="InterPro" id="IPR027266">
    <property type="entry name" value="TrmE/GcvT_dom1"/>
</dbReference>
<dbReference type="NCBIfam" id="NF003661">
    <property type="entry name" value="PRK05291.1-3"/>
    <property type="match status" value="1"/>
</dbReference>
<dbReference type="NCBIfam" id="TIGR00231">
    <property type="entry name" value="small_GTP"/>
    <property type="match status" value="1"/>
</dbReference>
<dbReference type="PANTHER" id="PTHR42714">
    <property type="entry name" value="TRNA MODIFICATION GTPASE GTPBP3"/>
    <property type="match status" value="1"/>
</dbReference>
<dbReference type="PANTHER" id="PTHR42714:SF2">
    <property type="entry name" value="TRNA MODIFICATION GTPASE GTPBP3, MITOCHONDRIAL"/>
    <property type="match status" value="1"/>
</dbReference>
<dbReference type="Pfam" id="PF01926">
    <property type="entry name" value="MMR_HSR1"/>
    <property type="match status" value="1"/>
</dbReference>
<dbReference type="Pfam" id="PF12631">
    <property type="entry name" value="MnmE_helical"/>
    <property type="match status" value="1"/>
</dbReference>
<dbReference type="Pfam" id="PF10396">
    <property type="entry name" value="TrmE_N"/>
    <property type="match status" value="1"/>
</dbReference>
<dbReference type="PRINTS" id="PR00326">
    <property type="entry name" value="GTP1OBG"/>
</dbReference>
<dbReference type="SUPFAM" id="SSF52540">
    <property type="entry name" value="P-loop containing nucleoside triphosphate hydrolases"/>
    <property type="match status" value="1"/>
</dbReference>
<dbReference type="SUPFAM" id="SSF116878">
    <property type="entry name" value="TrmE connector domain"/>
    <property type="match status" value="1"/>
</dbReference>
<dbReference type="PROSITE" id="PS51709">
    <property type="entry name" value="G_TRME"/>
    <property type="match status" value="1"/>
</dbReference>
<organism>
    <name type="scientific">Erythrobacter litoralis (strain HTCC2594)</name>
    <dbReference type="NCBI Taxonomy" id="314225"/>
    <lineage>
        <taxon>Bacteria</taxon>
        <taxon>Pseudomonadati</taxon>
        <taxon>Pseudomonadota</taxon>
        <taxon>Alphaproteobacteria</taxon>
        <taxon>Sphingomonadales</taxon>
        <taxon>Erythrobacteraceae</taxon>
        <taxon>Erythrobacter/Porphyrobacter group</taxon>
        <taxon>Erythrobacter</taxon>
    </lineage>
</organism>
<reference key="1">
    <citation type="journal article" date="2009" name="J. Bacteriol.">
        <title>Complete genome sequence of Erythrobacter litoralis HTCC2594.</title>
        <authorList>
            <person name="Oh H.M."/>
            <person name="Giovannoni S.J."/>
            <person name="Ferriera S."/>
            <person name="Johnson J."/>
            <person name="Cho J.C."/>
        </authorList>
    </citation>
    <scope>NUCLEOTIDE SEQUENCE [LARGE SCALE GENOMIC DNA]</scope>
    <source>
        <strain>HTCC2594</strain>
    </source>
</reference>
<comment type="function">
    <text evidence="1">Exhibits a very high intrinsic GTPase hydrolysis rate. Involved in the addition of a carboxymethylaminomethyl (cmnm) group at the wobble position (U34) of certain tRNAs, forming tRNA-cmnm(5)s(2)U34.</text>
</comment>
<comment type="cofactor">
    <cofactor evidence="1">
        <name>K(+)</name>
        <dbReference type="ChEBI" id="CHEBI:29103"/>
    </cofactor>
    <text evidence="1">Binds 1 potassium ion per subunit.</text>
</comment>
<comment type="subunit">
    <text evidence="1">Homodimer. Heterotetramer of two MnmE and two MnmG subunits.</text>
</comment>
<comment type="subcellular location">
    <subcellularLocation>
        <location evidence="1">Cytoplasm</location>
    </subcellularLocation>
</comment>
<comment type="similarity">
    <text evidence="1">Belongs to the TRAFAC class TrmE-Era-EngA-EngB-Septin-like GTPase superfamily. TrmE GTPase family.</text>
</comment>
<proteinExistence type="inferred from homology"/>
<protein>
    <recommendedName>
        <fullName evidence="1">tRNA modification GTPase MnmE</fullName>
        <ecNumber evidence="1">3.6.-.-</ecNumber>
    </recommendedName>
</protein>
<keyword id="KW-0963">Cytoplasm</keyword>
<keyword id="KW-0342">GTP-binding</keyword>
<keyword id="KW-0378">Hydrolase</keyword>
<keyword id="KW-0460">Magnesium</keyword>
<keyword id="KW-0479">Metal-binding</keyword>
<keyword id="KW-0547">Nucleotide-binding</keyword>
<keyword id="KW-0630">Potassium</keyword>
<keyword id="KW-1185">Reference proteome</keyword>
<keyword id="KW-0819">tRNA processing</keyword>
<gene>
    <name evidence="1" type="primary">mnmE</name>
    <name evidence="1" type="synonym">trmE</name>
    <name type="ordered locus">ELI_13050</name>
</gene>
<name>MNME_ERYLH</name>
<feature type="chain" id="PRO_0000345781" description="tRNA modification GTPase MnmE">
    <location>
        <begin position="1"/>
        <end position="424"/>
    </location>
</feature>
<feature type="domain" description="TrmE-type G">
    <location>
        <begin position="212"/>
        <end position="351"/>
    </location>
</feature>
<feature type="binding site" evidence="1">
    <location>
        <position position="20"/>
    </location>
    <ligand>
        <name>(6S)-5-formyl-5,6,7,8-tetrahydrofolate</name>
        <dbReference type="ChEBI" id="CHEBI:57457"/>
    </ligand>
</feature>
<feature type="binding site" evidence="1">
    <location>
        <position position="77"/>
    </location>
    <ligand>
        <name>(6S)-5-formyl-5,6,7,8-tetrahydrofolate</name>
        <dbReference type="ChEBI" id="CHEBI:57457"/>
    </ligand>
</feature>
<feature type="binding site" evidence="1">
    <location>
        <position position="117"/>
    </location>
    <ligand>
        <name>(6S)-5-formyl-5,6,7,8-tetrahydrofolate</name>
        <dbReference type="ChEBI" id="CHEBI:57457"/>
    </ligand>
</feature>
<feature type="binding site" evidence="1">
    <location>
        <begin position="222"/>
        <end position="227"/>
    </location>
    <ligand>
        <name>GTP</name>
        <dbReference type="ChEBI" id="CHEBI:37565"/>
    </ligand>
</feature>
<feature type="binding site" evidence="1">
    <location>
        <position position="222"/>
    </location>
    <ligand>
        <name>K(+)</name>
        <dbReference type="ChEBI" id="CHEBI:29103"/>
    </ligand>
</feature>
<feature type="binding site" evidence="1">
    <location>
        <position position="226"/>
    </location>
    <ligand>
        <name>Mg(2+)</name>
        <dbReference type="ChEBI" id="CHEBI:18420"/>
    </ligand>
</feature>
<feature type="binding site" evidence="1">
    <location>
        <begin position="241"/>
        <end position="247"/>
    </location>
    <ligand>
        <name>GTP</name>
        <dbReference type="ChEBI" id="CHEBI:37565"/>
    </ligand>
</feature>
<feature type="binding site" evidence="1">
    <location>
        <position position="241"/>
    </location>
    <ligand>
        <name>K(+)</name>
        <dbReference type="ChEBI" id="CHEBI:29103"/>
    </ligand>
</feature>
<feature type="binding site" evidence="1">
    <location>
        <position position="243"/>
    </location>
    <ligand>
        <name>K(+)</name>
        <dbReference type="ChEBI" id="CHEBI:29103"/>
    </ligand>
</feature>
<feature type="binding site" evidence="1">
    <location>
        <position position="246"/>
    </location>
    <ligand>
        <name>K(+)</name>
        <dbReference type="ChEBI" id="CHEBI:29103"/>
    </ligand>
</feature>
<feature type="binding site" evidence="1">
    <location>
        <position position="247"/>
    </location>
    <ligand>
        <name>Mg(2+)</name>
        <dbReference type="ChEBI" id="CHEBI:18420"/>
    </ligand>
</feature>
<feature type="binding site" evidence="1">
    <location>
        <begin position="266"/>
        <end position="269"/>
    </location>
    <ligand>
        <name>GTP</name>
        <dbReference type="ChEBI" id="CHEBI:37565"/>
    </ligand>
</feature>
<feature type="binding site" evidence="1">
    <location>
        <position position="424"/>
    </location>
    <ligand>
        <name>(6S)-5-formyl-5,6,7,8-tetrahydrofolate</name>
        <dbReference type="ChEBI" id="CHEBI:57457"/>
    </ligand>
</feature>
<evidence type="ECO:0000255" key="1">
    <source>
        <dbReference type="HAMAP-Rule" id="MF_00379"/>
    </source>
</evidence>
<accession>Q2N6I9</accession>